<name>NADK_RICPU</name>
<reference key="1">
    <citation type="journal article" date="2009" name="PLoS ONE">
        <title>Genome sequence of the endosymbiont Rickettsia peacockii and comparison with virulent Rickettsia rickettsii: identification of virulence factors.</title>
        <authorList>
            <person name="Felsheim R.F."/>
            <person name="Kurtti T.J."/>
            <person name="Munderloh U.G."/>
        </authorList>
    </citation>
    <scope>NUCLEOTIDE SEQUENCE [LARGE SCALE GENOMIC DNA]</scope>
    <source>
        <strain>Rustic</strain>
    </source>
</reference>
<dbReference type="EC" id="2.7.1.23" evidence="1"/>
<dbReference type="EMBL" id="CP001227">
    <property type="protein sequence ID" value="ACR47093.1"/>
    <property type="molecule type" value="Genomic_DNA"/>
</dbReference>
<dbReference type="RefSeq" id="WP_012736393.1">
    <property type="nucleotide sequence ID" value="NC_012730.1"/>
</dbReference>
<dbReference type="SMR" id="C4K0J2"/>
<dbReference type="KEGG" id="rpk:RPR_00590"/>
<dbReference type="HOGENOM" id="CLU_073319_0_0_5"/>
<dbReference type="Proteomes" id="UP000005015">
    <property type="component" value="Chromosome"/>
</dbReference>
<dbReference type="GO" id="GO:0005737">
    <property type="term" value="C:cytoplasm"/>
    <property type="evidence" value="ECO:0007669"/>
    <property type="project" value="UniProtKB-SubCell"/>
</dbReference>
<dbReference type="GO" id="GO:0005524">
    <property type="term" value="F:ATP binding"/>
    <property type="evidence" value="ECO:0007669"/>
    <property type="project" value="UniProtKB-KW"/>
</dbReference>
<dbReference type="GO" id="GO:0046872">
    <property type="term" value="F:metal ion binding"/>
    <property type="evidence" value="ECO:0007669"/>
    <property type="project" value="UniProtKB-UniRule"/>
</dbReference>
<dbReference type="GO" id="GO:0051287">
    <property type="term" value="F:NAD binding"/>
    <property type="evidence" value="ECO:0007669"/>
    <property type="project" value="UniProtKB-ARBA"/>
</dbReference>
<dbReference type="GO" id="GO:0003951">
    <property type="term" value="F:NAD+ kinase activity"/>
    <property type="evidence" value="ECO:0007669"/>
    <property type="project" value="UniProtKB-UniRule"/>
</dbReference>
<dbReference type="GO" id="GO:0019674">
    <property type="term" value="P:NAD metabolic process"/>
    <property type="evidence" value="ECO:0007669"/>
    <property type="project" value="InterPro"/>
</dbReference>
<dbReference type="GO" id="GO:0006741">
    <property type="term" value="P:NADP biosynthetic process"/>
    <property type="evidence" value="ECO:0007669"/>
    <property type="project" value="UniProtKB-UniRule"/>
</dbReference>
<dbReference type="Gene3D" id="3.40.50.10330">
    <property type="entry name" value="Probable inorganic polyphosphate/atp-NAD kinase, domain 1"/>
    <property type="match status" value="1"/>
</dbReference>
<dbReference type="Gene3D" id="2.60.200.30">
    <property type="entry name" value="Probable inorganic polyphosphate/atp-NAD kinase, domain 2"/>
    <property type="match status" value="1"/>
</dbReference>
<dbReference type="HAMAP" id="MF_00361">
    <property type="entry name" value="NAD_kinase"/>
    <property type="match status" value="1"/>
</dbReference>
<dbReference type="InterPro" id="IPR017438">
    <property type="entry name" value="ATP-NAD_kinase_N"/>
</dbReference>
<dbReference type="InterPro" id="IPR017437">
    <property type="entry name" value="ATP-NAD_kinase_PpnK-typ_C"/>
</dbReference>
<dbReference type="InterPro" id="IPR016064">
    <property type="entry name" value="NAD/diacylglycerol_kinase_sf"/>
</dbReference>
<dbReference type="InterPro" id="IPR002504">
    <property type="entry name" value="NADK"/>
</dbReference>
<dbReference type="NCBIfam" id="NF003406">
    <property type="entry name" value="PRK04761.1"/>
    <property type="match status" value="1"/>
</dbReference>
<dbReference type="PANTHER" id="PTHR20275">
    <property type="entry name" value="NAD KINASE"/>
    <property type="match status" value="1"/>
</dbReference>
<dbReference type="PANTHER" id="PTHR20275:SF0">
    <property type="entry name" value="NAD KINASE"/>
    <property type="match status" value="1"/>
</dbReference>
<dbReference type="Pfam" id="PF01513">
    <property type="entry name" value="NAD_kinase"/>
    <property type="match status" value="1"/>
</dbReference>
<dbReference type="Pfam" id="PF20143">
    <property type="entry name" value="NAD_kinase_C"/>
    <property type="match status" value="1"/>
</dbReference>
<dbReference type="SUPFAM" id="SSF111331">
    <property type="entry name" value="NAD kinase/diacylglycerol kinase-like"/>
    <property type="match status" value="1"/>
</dbReference>
<organism>
    <name type="scientific">Rickettsia peacockii (strain Rustic)</name>
    <dbReference type="NCBI Taxonomy" id="562019"/>
    <lineage>
        <taxon>Bacteria</taxon>
        <taxon>Pseudomonadati</taxon>
        <taxon>Pseudomonadota</taxon>
        <taxon>Alphaproteobacteria</taxon>
        <taxon>Rickettsiales</taxon>
        <taxon>Rickettsiaceae</taxon>
        <taxon>Rickettsieae</taxon>
        <taxon>Rickettsia</taxon>
        <taxon>spotted fever group</taxon>
    </lineage>
</organism>
<protein>
    <recommendedName>
        <fullName evidence="1">NAD kinase</fullName>
        <ecNumber evidence="1">2.7.1.23</ecNumber>
    </recommendedName>
    <alternativeName>
        <fullName evidence="1">ATP-dependent NAD kinase</fullName>
    </alternativeName>
</protein>
<accession>C4K0J2</accession>
<comment type="function">
    <text evidence="1">Involved in the regulation of the intracellular balance of NAD and NADP, and is a key enzyme in the biosynthesis of NADP. Catalyzes specifically the phosphorylation on 2'-hydroxyl of the adenosine moiety of NAD to yield NADP.</text>
</comment>
<comment type="catalytic activity">
    <reaction evidence="1">
        <text>NAD(+) + ATP = ADP + NADP(+) + H(+)</text>
        <dbReference type="Rhea" id="RHEA:18629"/>
        <dbReference type="ChEBI" id="CHEBI:15378"/>
        <dbReference type="ChEBI" id="CHEBI:30616"/>
        <dbReference type="ChEBI" id="CHEBI:57540"/>
        <dbReference type="ChEBI" id="CHEBI:58349"/>
        <dbReference type="ChEBI" id="CHEBI:456216"/>
        <dbReference type="EC" id="2.7.1.23"/>
    </reaction>
</comment>
<comment type="cofactor">
    <cofactor evidence="1">
        <name>a divalent metal cation</name>
        <dbReference type="ChEBI" id="CHEBI:60240"/>
    </cofactor>
</comment>
<comment type="subcellular location">
    <subcellularLocation>
        <location evidence="1">Cytoplasm</location>
    </subcellularLocation>
</comment>
<comment type="similarity">
    <text evidence="1">Belongs to the NAD kinase family.</text>
</comment>
<evidence type="ECO:0000255" key="1">
    <source>
        <dbReference type="HAMAP-Rule" id="MF_00361"/>
    </source>
</evidence>
<proteinExistence type="inferred from homology"/>
<gene>
    <name evidence="1" type="primary">nadK</name>
    <name type="ordered locus">RPR_00590</name>
</gene>
<keyword id="KW-0067">ATP-binding</keyword>
<keyword id="KW-0963">Cytoplasm</keyword>
<keyword id="KW-0418">Kinase</keyword>
<keyword id="KW-0520">NAD</keyword>
<keyword id="KW-0521">NADP</keyword>
<keyword id="KW-0547">Nucleotide-binding</keyword>
<keyword id="KW-0808">Transferase</keyword>
<sequence length="255" mass="28544">MNINKIALIYNHNSKHLAIIEEIKKLYNYCKIEEAEVIIVIGGDGELLHNIHRYMHLNIPFYGVNLGNLGFLMNPLDTKKLLQNIHESTVSILNPLLMQVEDTSGQIYTALAINEVSIFRKTNQAAKFRIEVNGIERMSELVADGALVATPAGSSAYNLSASGPILPLESNMLCLTPICSFRPRRWHGALLLSSATIKFEILNTNKRPVNATADFQEFNNITNVTVKSTKDKPVKLLFNKNHTLEDRIIKEQFGG</sequence>
<feature type="chain" id="PRO_1000205424" description="NAD kinase">
    <location>
        <begin position="1"/>
        <end position="255"/>
    </location>
</feature>
<feature type="active site" description="Proton acceptor" evidence="1">
    <location>
        <position position="44"/>
    </location>
</feature>
<feature type="binding site" evidence="1">
    <location>
        <begin position="44"/>
        <end position="45"/>
    </location>
    <ligand>
        <name>NAD(+)</name>
        <dbReference type="ChEBI" id="CHEBI:57540"/>
    </ligand>
</feature>
<feature type="binding site" evidence="1">
    <location>
        <position position="49"/>
    </location>
    <ligand>
        <name>NAD(+)</name>
        <dbReference type="ChEBI" id="CHEBI:57540"/>
    </ligand>
</feature>
<feature type="binding site" evidence="1">
    <location>
        <begin position="114"/>
        <end position="115"/>
    </location>
    <ligand>
        <name>NAD(+)</name>
        <dbReference type="ChEBI" id="CHEBI:57540"/>
    </ligand>
</feature>
<feature type="binding site" evidence="1">
    <location>
        <position position="144"/>
    </location>
    <ligand>
        <name>NAD(+)</name>
        <dbReference type="ChEBI" id="CHEBI:57540"/>
    </ligand>
</feature>
<feature type="binding site" evidence="1">
    <location>
        <position position="152"/>
    </location>
    <ligand>
        <name>NAD(+)</name>
        <dbReference type="ChEBI" id="CHEBI:57540"/>
    </ligand>
</feature>
<feature type="binding site" evidence="1">
    <location>
        <begin position="155"/>
        <end position="160"/>
    </location>
    <ligand>
        <name>NAD(+)</name>
        <dbReference type="ChEBI" id="CHEBI:57540"/>
    </ligand>
</feature>
<feature type="binding site" evidence="1">
    <location>
        <position position="216"/>
    </location>
    <ligand>
        <name>NAD(+)</name>
        <dbReference type="ChEBI" id="CHEBI:57540"/>
    </ligand>
</feature>